<feature type="chain" id="PRO_1000012373" description="UDP-N-acetylmuramoyl-L-alanyl-D-glutamate--2,6-diaminopimelate ligase">
    <location>
        <begin position="1"/>
        <end position="486"/>
    </location>
</feature>
<feature type="short sequence motif" description="Meso-diaminopimelate recognition motif">
    <location>
        <begin position="402"/>
        <end position="405"/>
    </location>
</feature>
<feature type="binding site" evidence="1">
    <location>
        <position position="30"/>
    </location>
    <ligand>
        <name>UDP-N-acetyl-alpha-D-muramoyl-L-alanyl-D-glutamate</name>
        <dbReference type="ChEBI" id="CHEBI:83900"/>
    </ligand>
</feature>
<feature type="binding site" evidence="1">
    <location>
        <begin position="111"/>
        <end position="117"/>
    </location>
    <ligand>
        <name>ATP</name>
        <dbReference type="ChEBI" id="CHEBI:30616"/>
    </ligand>
</feature>
<feature type="binding site" evidence="1">
    <location>
        <begin position="153"/>
        <end position="154"/>
    </location>
    <ligand>
        <name>UDP-N-acetyl-alpha-D-muramoyl-L-alanyl-D-glutamate</name>
        <dbReference type="ChEBI" id="CHEBI:83900"/>
    </ligand>
</feature>
<feature type="binding site" evidence="1">
    <location>
        <position position="180"/>
    </location>
    <ligand>
        <name>UDP-N-acetyl-alpha-D-muramoyl-L-alanyl-D-glutamate</name>
        <dbReference type="ChEBI" id="CHEBI:83900"/>
    </ligand>
</feature>
<feature type="binding site" evidence="1">
    <location>
        <position position="186"/>
    </location>
    <ligand>
        <name>UDP-N-acetyl-alpha-D-muramoyl-L-alanyl-D-glutamate</name>
        <dbReference type="ChEBI" id="CHEBI:83900"/>
    </ligand>
</feature>
<feature type="binding site" evidence="1">
    <location>
        <position position="188"/>
    </location>
    <ligand>
        <name>UDP-N-acetyl-alpha-D-muramoyl-L-alanyl-D-glutamate</name>
        <dbReference type="ChEBI" id="CHEBI:83900"/>
    </ligand>
</feature>
<feature type="binding site" evidence="1">
    <location>
        <position position="378"/>
    </location>
    <ligand>
        <name>meso-2,6-diaminopimelate</name>
        <dbReference type="ChEBI" id="CHEBI:57791"/>
    </ligand>
</feature>
<feature type="binding site" evidence="1">
    <location>
        <begin position="402"/>
        <end position="405"/>
    </location>
    <ligand>
        <name>meso-2,6-diaminopimelate</name>
        <dbReference type="ChEBI" id="CHEBI:57791"/>
    </ligand>
</feature>
<feature type="binding site" evidence="1">
    <location>
        <position position="455"/>
    </location>
    <ligand>
        <name>meso-2,6-diaminopimelate</name>
        <dbReference type="ChEBI" id="CHEBI:57791"/>
    </ligand>
</feature>
<feature type="binding site" evidence="1">
    <location>
        <position position="459"/>
    </location>
    <ligand>
        <name>meso-2,6-diaminopimelate</name>
        <dbReference type="ChEBI" id="CHEBI:57791"/>
    </ligand>
</feature>
<feature type="modified residue" description="N6-carboxylysine" evidence="1">
    <location>
        <position position="220"/>
    </location>
</feature>
<keyword id="KW-0067">ATP-binding</keyword>
<keyword id="KW-0131">Cell cycle</keyword>
<keyword id="KW-0132">Cell division</keyword>
<keyword id="KW-0133">Cell shape</keyword>
<keyword id="KW-0961">Cell wall biogenesis/degradation</keyword>
<keyword id="KW-0963">Cytoplasm</keyword>
<keyword id="KW-0436">Ligase</keyword>
<keyword id="KW-0460">Magnesium</keyword>
<keyword id="KW-0547">Nucleotide-binding</keyword>
<keyword id="KW-0573">Peptidoglycan synthesis</keyword>
<keyword id="KW-1185">Reference proteome</keyword>
<comment type="function">
    <text evidence="1">Catalyzes the addition of meso-diaminopimelic acid to the nucleotide precursor UDP-N-acetylmuramoyl-L-alanyl-D-glutamate (UMAG) in the biosynthesis of bacterial cell-wall peptidoglycan.</text>
</comment>
<comment type="catalytic activity">
    <reaction evidence="1">
        <text>UDP-N-acetyl-alpha-D-muramoyl-L-alanyl-D-glutamate + meso-2,6-diaminopimelate + ATP = UDP-N-acetyl-alpha-D-muramoyl-L-alanyl-gamma-D-glutamyl-meso-2,6-diaminopimelate + ADP + phosphate + H(+)</text>
        <dbReference type="Rhea" id="RHEA:23676"/>
        <dbReference type="ChEBI" id="CHEBI:15378"/>
        <dbReference type="ChEBI" id="CHEBI:30616"/>
        <dbReference type="ChEBI" id="CHEBI:43474"/>
        <dbReference type="ChEBI" id="CHEBI:57791"/>
        <dbReference type="ChEBI" id="CHEBI:83900"/>
        <dbReference type="ChEBI" id="CHEBI:83905"/>
        <dbReference type="ChEBI" id="CHEBI:456216"/>
        <dbReference type="EC" id="6.3.2.13"/>
    </reaction>
</comment>
<comment type="cofactor">
    <cofactor evidence="1">
        <name>Mg(2+)</name>
        <dbReference type="ChEBI" id="CHEBI:18420"/>
    </cofactor>
</comment>
<comment type="pathway">
    <text evidence="1">Cell wall biogenesis; peptidoglycan biosynthesis.</text>
</comment>
<comment type="subcellular location">
    <subcellularLocation>
        <location evidence="1">Cytoplasm</location>
    </subcellularLocation>
</comment>
<comment type="PTM">
    <text evidence="1">Carboxylation is probably crucial for Mg(2+) binding and, consequently, for the gamma-phosphate positioning of ATP.</text>
</comment>
<comment type="similarity">
    <text evidence="1">Belongs to the MurCDEF family. MurE subfamily.</text>
</comment>
<name>MURE_PARD8</name>
<protein>
    <recommendedName>
        <fullName evidence="1">UDP-N-acetylmuramoyl-L-alanyl-D-glutamate--2,6-diaminopimelate ligase</fullName>
        <ecNumber evidence="1">6.3.2.13</ecNumber>
    </recommendedName>
    <alternativeName>
        <fullName evidence="1">Meso-A2pm-adding enzyme</fullName>
    </alternativeName>
    <alternativeName>
        <fullName evidence="1">Meso-diaminopimelate-adding enzyme</fullName>
    </alternativeName>
    <alternativeName>
        <fullName evidence="1">UDP-MurNAc-L-Ala-D-Glu:meso-diaminopimelate ligase</fullName>
    </alternativeName>
    <alternativeName>
        <fullName evidence="1">UDP-MurNAc-tripeptide synthetase</fullName>
    </alternativeName>
    <alternativeName>
        <fullName evidence="1">UDP-N-acetylmuramyl-tripeptide synthetase</fullName>
    </alternativeName>
</protein>
<accession>A6LEU7</accession>
<gene>
    <name evidence="1" type="primary">murE</name>
    <name type="ordered locus">BDI_2491</name>
</gene>
<reference key="1">
    <citation type="journal article" date="2007" name="PLoS Biol.">
        <title>Evolution of symbiotic bacteria in the distal human intestine.</title>
        <authorList>
            <person name="Xu J."/>
            <person name="Mahowald M.A."/>
            <person name="Ley R.E."/>
            <person name="Lozupone C.A."/>
            <person name="Hamady M."/>
            <person name="Martens E.C."/>
            <person name="Henrissat B."/>
            <person name="Coutinho P.M."/>
            <person name="Minx P."/>
            <person name="Latreille P."/>
            <person name="Cordum H."/>
            <person name="Van Brunt A."/>
            <person name="Kim K."/>
            <person name="Fulton R.S."/>
            <person name="Fulton L.A."/>
            <person name="Clifton S.W."/>
            <person name="Wilson R.K."/>
            <person name="Knight R.D."/>
            <person name="Gordon J.I."/>
        </authorList>
    </citation>
    <scope>NUCLEOTIDE SEQUENCE [LARGE SCALE GENOMIC DNA]</scope>
    <source>
        <strain>ATCC 8503 / DSM 20701 / CIP 104284 / JCM 5825 / NCTC 11152</strain>
    </source>
</reference>
<proteinExistence type="inferred from homology"/>
<organism>
    <name type="scientific">Parabacteroides distasonis (strain ATCC 8503 / DSM 20701 / CIP 104284 / JCM 5825 / NCTC 11152)</name>
    <dbReference type="NCBI Taxonomy" id="435591"/>
    <lineage>
        <taxon>Bacteria</taxon>
        <taxon>Pseudomonadati</taxon>
        <taxon>Bacteroidota</taxon>
        <taxon>Bacteroidia</taxon>
        <taxon>Bacteroidales</taxon>
        <taxon>Tannerellaceae</taxon>
        <taxon>Parabacteroides</taxon>
    </lineage>
</organism>
<dbReference type="EC" id="6.3.2.13" evidence="1"/>
<dbReference type="EMBL" id="CP000140">
    <property type="protein sequence ID" value="ABR44211.1"/>
    <property type="molecule type" value="Genomic_DNA"/>
</dbReference>
<dbReference type="RefSeq" id="WP_011966870.1">
    <property type="nucleotide sequence ID" value="NC_009615.1"/>
</dbReference>
<dbReference type="SMR" id="A6LEU7"/>
<dbReference type="STRING" id="435591.BDI_2491"/>
<dbReference type="PaxDb" id="435591-BDI_2491"/>
<dbReference type="KEGG" id="pdi:BDI_2491"/>
<dbReference type="PATRIC" id="fig|435591.13.peg.2474"/>
<dbReference type="eggNOG" id="COG0769">
    <property type="taxonomic scope" value="Bacteria"/>
</dbReference>
<dbReference type="HOGENOM" id="CLU_022291_4_1_10"/>
<dbReference type="BioCyc" id="PDIS435591:G1G5A-2560-MONOMER"/>
<dbReference type="UniPathway" id="UPA00219"/>
<dbReference type="Proteomes" id="UP000000566">
    <property type="component" value="Chromosome"/>
</dbReference>
<dbReference type="GO" id="GO:0005737">
    <property type="term" value="C:cytoplasm"/>
    <property type="evidence" value="ECO:0007669"/>
    <property type="project" value="UniProtKB-SubCell"/>
</dbReference>
<dbReference type="GO" id="GO:0005524">
    <property type="term" value="F:ATP binding"/>
    <property type="evidence" value="ECO:0007669"/>
    <property type="project" value="UniProtKB-UniRule"/>
</dbReference>
<dbReference type="GO" id="GO:0000287">
    <property type="term" value="F:magnesium ion binding"/>
    <property type="evidence" value="ECO:0007669"/>
    <property type="project" value="UniProtKB-UniRule"/>
</dbReference>
<dbReference type="GO" id="GO:0008765">
    <property type="term" value="F:UDP-N-acetylmuramoylalanyl-D-glutamate-2,6-diaminopimelate ligase activity"/>
    <property type="evidence" value="ECO:0007669"/>
    <property type="project" value="UniProtKB-UniRule"/>
</dbReference>
<dbReference type="GO" id="GO:0051301">
    <property type="term" value="P:cell division"/>
    <property type="evidence" value="ECO:0007669"/>
    <property type="project" value="UniProtKB-KW"/>
</dbReference>
<dbReference type="GO" id="GO:0071555">
    <property type="term" value="P:cell wall organization"/>
    <property type="evidence" value="ECO:0007669"/>
    <property type="project" value="UniProtKB-KW"/>
</dbReference>
<dbReference type="GO" id="GO:0009252">
    <property type="term" value="P:peptidoglycan biosynthetic process"/>
    <property type="evidence" value="ECO:0007669"/>
    <property type="project" value="UniProtKB-UniRule"/>
</dbReference>
<dbReference type="GO" id="GO:0008360">
    <property type="term" value="P:regulation of cell shape"/>
    <property type="evidence" value="ECO:0007669"/>
    <property type="project" value="UniProtKB-KW"/>
</dbReference>
<dbReference type="Gene3D" id="3.90.190.20">
    <property type="entry name" value="Mur ligase, C-terminal domain"/>
    <property type="match status" value="1"/>
</dbReference>
<dbReference type="Gene3D" id="3.40.1190.10">
    <property type="entry name" value="Mur-like, catalytic domain"/>
    <property type="match status" value="1"/>
</dbReference>
<dbReference type="Gene3D" id="3.40.1390.10">
    <property type="entry name" value="MurE/MurF, N-terminal domain"/>
    <property type="match status" value="1"/>
</dbReference>
<dbReference type="HAMAP" id="MF_00208">
    <property type="entry name" value="MurE"/>
    <property type="match status" value="1"/>
</dbReference>
<dbReference type="InterPro" id="IPR036565">
    <property type="entry name" value="Mur-like_cat_sf"/>
</dbReference>
<dbReference type="InterPro" id="IPR004101">
    <property type="entry name" value="Mur_ligase_C"/>
</dbReference>
<dbReference type="InterPro" id="IPR036615">
    <property type="entry name" value="Mur_ligase_C_dom_sf"/>
</dbReference>
<dbReference type="InterPro" id="IPR013221">
    <property type="entry name" value="Mur_ligase_cen"/>
</dbReference>
<dbReference type="InterPro" id="IPR000713">
    <property type="entry name" value="Mur_ligase_N"/>
</dbReference>
<dbReference type="InterPro" id="IPR035911">
    <property type="entry name" value="MurE/MurF_N"/>
</dbReference>
<dbReference type="InterPro" id="IPR005761">
    <property type="entry name" value="UDP-N-AcMur-Glu-dNH2Pim_ligase"/>
</dbReference>
<dbReference type="NCBIfam" id="TIGR01085">
    <property type="entry name" value="murE"/>
    <property type="match status" value="1"/>
</dbReference>
<dbReference type="NCBIfam" id="NF001124">
    <property type="entry name" value="PRK00139.1-2"/>
    <property type="match status" value="1"/>
</dbReference>
<dbReference type="NCBIfam" id="NF001126">
    <property type="entry name" value="PRK00139.1-4"/>
    <property type="match status" value="1"/>
</dbReference>
<dbReference type="PANTHER" id="PTHR23135">
    <property type="entry name" value="MUR LIGASE FAMILY MEMBER"/>
    <property type="match status" value="1"/>
</dbReference>
<dbReference type="PANTHER" id="PTHR23135:SF4">
    <property type="entry name" value="UDP-N-ACETYLMURAMOYL-L-ALANYL-D-GLUTAMATE--2,6-DIAMINOPIMELATE LIGASE MURE HOMOLOG, CHLOROPLASTIC"/>
    <property type="match status" value="1"/>
</dbReference>
<dbReference type="Pfam" id="PF01225">
    <property type="entry name" value="Mur_ligase"/>
    <property type="match status" value="1"/>
</dbReference>
<dbReference type="Pfam" id="PF02875">
    <property type="entry name" value="Mur_ligase_C"/>
    <property type="match status" value="1"/>
</dbReference>
<dbReference type="Pfam" id="PF08245">
    <property type="entry name" value="Mur_ligase_M"/>
    <property type="match status" value="1"/>
</dbReference>
<dbReference type="SUPFAM" id="SSF53623">
    <property type="entry name" value="MurD-like peptide ligases, catalytic domain"/>
    <property type="match status" value="1"/>
</dbReference>
<dbReference type="SUPFAM" id="SSF53244">
    <property type="entry name" value="MurD-like peptide ligases, peptide-binding domain"/>
    <property type="match status" value="1"/>
</dbReference>
<dbReference type="SUPFAM" id="SSF63418">
    <property type="entry name" value="MurE/MurF N-terminal domain"/>
    <property type="match status" value="1"/>
</dbReference>
<evidence type="ECO:0000255" key="1">
    <source>
        <dbReference type="HAMAP-Rule" id="MF_00208"/>
    </source>
</evidence>
<sequence>MELRDLIGALEAPMLMGADNVDITNIQSDSRRVTKGSLFVAVRGTAVDGHAYMDSAIEKGAVAIVCEETPSYLEGRCSFIVVKDSAEALGLLVSRWYGDPSRKLMLVGVTGTNGKTTIATLLYEMFRKMGHKVGLLSTVCNYIDGEAVPTDHTTPDPLTLHSLMARMVEAGCEYAFMEVSSHSIDQRRISGLSFDGGIFTNLTRDHLDYHKTVENYLKAKKKFFDDLPAGTFALTNADDKSGLVMLQNTKAKKLTYSLRTLADFKGKILESHFEGTDLIINGREVMVHFVGRFNAYNLLAVYGAAVSLGKDPEEVLIVLSTLRSVSGRFETIQSPLGYTAIVDYAHTPDALTNVLNGIHEVLDGKGRIITVVGAGGNRDKGKRPLMAKEAVKLSDQVILTSDNPRFEEPDDIINDMVAGLTKMDMERTLCITDRTQAIKTATMLAKKGDVILVAGKGHEDYQEIKGVKQHFDDREKLREIFSTQQS</sequence>